<feature type="chain" id="PRO_0000351570" description="(4S)-4-hydroxy-5-phosphonooxypentane-2,3-dione isomerase">
    <location>
        <begin position="1"/>
        <end position="96"/>
    </location>
</feature>
<feature type="domain" description="ABM" evidence="1">
    <location>
        <begin position="2"/>
        <end position="91"/>
    </location>
</feature>
<keyword id="KW-0963">Cytoplasm</keyword>
<keyword id="KW-0413">Isomerase</keyword>
<name>LSRG_SALPA</name>
<proteinExistence type="inferred from homology"/>
<accession>Q5PJE2</accession>
<reference key="1">
    <citation type="journal article" date="2004" name="Nat. Genet.">
        <title>Comparison of genome degradation in Paratyphi A and Typhi, human-restricted serovars of Salmonella enterica that cause typhoid.</title>
        <authorList>
            <person name="McClelland M."/>
            <person name="Sanderson K.E."/>
            <person name="Clifton S.W."/>
            <person name="Latreille P."/>
            <person name="Porwollik S."/>
            <person name="Sabo A."/>
            <person name="Meyer R."/>
            <person name="Bieri T."/>
            <person name="Ozersky P."/>
            <person name="McLellan M."/>
            <person name="Harkins C.R."/>
            <person name="Wang C."/>
            <person name="Nguyen C."/>
            <person name="Berghoff A."/>
            <person name="Elliott G."/>
            <person name="Kohlberg S."/>
            <person name="Strong C."/>
            <person name="Du F."/>
            <person name="Carter J."/>
            <person name="Kremizki C."/>
            <person name="Layman D."/>
            <person name="Leonard S."/>
            <person name="Sun H."/>
            <person name="Fulton L."/>
            <person name="Nash W."/>
            <person name="Miner T."/>
            <person name="Minx P."/>
            <person name="Delehaunty K."/>
            <person name="Fronick C."/>
            <person name="Magrini V."/>
            <person name="Nhan M."/>
            <person name="Warren W."/>
            <person name="Florea L."/>
            <person name="Spieth J."/>
            <person name="Wilson R.K."/>
        </authorList>
    </citation>
    <scope>NUCLEOTIDE SEQUENCE [LARGE SCALE GENOMIC DNA]</scope>
    <source>
        <strain>ATCC 9150 / SARB42</strain>
    </source>
</reference>
<sequence>MHVTLVEINVHDDKVEQFIDVFRQNHLGSIKEPGNLRFDVLQDPQVPTRFYIYEAYVDEQAVAFHKTTPHYKTCVEQLEPLMTGPRTKKVFMGLMP</sequence>
<organism>
    <name type="scientific">Salmonella paratyphi A (strain ATCC 9150 / SARB42)</name>
    <dbReference type="NCBI Taxonomy" id="295319"/>
    <lineage>
        <taxon>Bacteria</taxon>
        <taxon>Pseudomonadati</taxon>
        <taxon>Pseudomonadota</taxon>
        <taxon>Gammaproteobacteria</taxon>
        <taxon>Enterobacterales</taxon>
        <taxon>Enterobacteriaceae</taxon>
        <taxon>Salmonella</taxon>
    </lineage>
</organism>
<protein>
    <recommendedName>
        <fullName evidence="1">(4S)-4-hydroxy-5-phosphonooxypentane-2,3-dione isomerase</fullName>
        <ecNumber evidence="1">5.3.1.32</ecNumber>
    </recommendedName>
    <alternativeName>
        <fullName evidence="1">Autoinducer 2-degrading protein LsrG</fullName>
        <shortName evidence="1">AI-2-degrading protein LsrG</shortName>
    </alternativeName>
    <alternativeName>
        <fullName evidence="1">Phospho-(S)-4,5-dihydroxy-2,3-pentanedione isomerase</fullName>
    </alternativeName>
    <alternativeName>
        <fullName evidence="1">Phospho-AI-2 isomerase</fullName>
    </alternativeName>
</protein>
<evidence type="ECO:0000255" key="1">
    <source>
        <dbReference type="HAMAP-Rule" id="MF_02051"/>
    </source>
</evidence>
<evidence type="ECO:0000305" key="2"/>
<dbReference type="EC" id="5.3.1.32" evidence="1"/>
<dbReference type="EMBL" id="CP000026">
    <property type="protein sequence ID" value="AAV79687.1"/>
    <property type="status" value="ALT_INIT"/>
    <property type="molecule type" value="Genomic_DNA"/>
</dbReference>
<dbReference type="RefSeq" id="WP_001543603.1">
    <property type="nucleotide sequence ID" value="NC_006511.1"/>
</dbReference>
<dbReference type="SMR" id="Q5PJE2"/>
<dbReference type="KEGG" id="spt:SPA3922"/>
<dbReference type="HOGENOM" id="CLU_131496_3_0_6"/>
<dbReference type="Proteomes" id="UP000008185">
    <property type="component" value="Chromosome"/>
</dbReference>
<dbReference type="GO" id="GO:0005829">
    <property type="term" value="C:cytosol"/>
    <property type="evidence" value="ECO:0007669"/>
    <property type="project" value="TreeGrafter"/>
</dbReference>
<dbReference type="GO" id="GO:0002952">
    <property type="term" value="F:(4S)-4-hydroxy-5-phosphonooxypentane-2,3-dione isomerase activity"/>
    <property type="evidence" value="ECO:0007669"/>
    <property type="project" value="UniProtKB-EC"/>
</dbReference>
<dbReference type="GO" id="GO:0016491">
    <property type="term" value="F:oxidoreductase activity"/>
    <property type="evidence" value="ECO:0007669"/>
    <property type="project" value="TreeGrafter"/>
</dbReference>
<dbReference type="FunFam" id="3.30.70.100:FF:000016">
    <property type="entry name" value="(4S)-4-hydroxy-5-phosphonooxypentane-2,3-dione isomerase"/>
    <property type="match status" value="1"/>
</dbReference>
<dbReference type="Gene3D" id="3.30.70.100">
    <property type="match status" value="1"/>
</dbReference>
<dbReference type="HAMAP" id="MF_02051">
    <property type="entry name" value="LsrG"/>
    <property type="match status" value="1"/>
</dbReference>
<dbReference type="InterPro" id="IPR007138">
    <property type="entry name" value="ABM_dom"/>
</dbReference>
<dbReference type="InterPro" id="IPR050744">
    <property type="entry name" value="AI-2_Isomerase_LsrG"/>
</dbReference>
<dbReference type="InterPro" id="IPR011008">
    <property type="entry name" value="Dimeric_a/b-barrel"/>
</dbReference>
<dbReference type="InterPro" id="IPR033672">
    <property type="entry name" value="LsrG"/>
</dbReference>
<dbReference type="NCBIfam" id="NF007791">
    <property type="entry name" value="PRK10486.1"/>
    <property type="match status" value="1"/>
</dbReference>
<dbReference type="PANTHER" id="PTHR33336:SF1">
    <property type="entry name" value="(4S)-4-HYDROXY-5-PHOSPHONOOXYPENTANE-2,3-DIONE ISOMERASE"/>
    <property type="match status" value="1"/>
</dbReference>
<dbReference type="PANTHER" id="PTHR33336">
    <property type="entry name" value="QUINOL MONOOXYGENASE YGIN-RELATED"/>
    <property type="match status" value="1"/>
</dbReference>
<dbReference type="Pfam" id="PF03992">
    <property type="entry name" value="ABM"/>
    <property type="match status" value="1"/>
</dbReference>
<dbReference type="SUPFAM" id="SSF54909">
    <property type="entry name" value="Dimeric alpha+beta barrel"/>
    <property type="match status" value="1"/>
</dbReference>
<dbReference type="PROSITE" id="PS51725">
    <property type="entry name" value="ABM"/>
    <property type="match status" value="1"/>
</dbReference>
<comment type="function">
    <text evidence="1">Involved in the degradation of phospho-AI-2, thereby terminating induction of the lsr operon and closing the AI-2 signaling cycle. Catalyzes the conversion of (4S)-4-hydroxy-5-phosphonooxypentane-2,3-dione (P-DPD) to 3-hydroxy-5-phosphonooxypentane-2,4-dione (P-HPD).</text>
</comment>
<comment type="catalytic activity">
    <reaction evidence="1">
        <text>(2S)-2-hydroxy-3,4-dioxopentyl phosphate = 3-hydroxy-2,4-dioxopentyl phosphate</text>
        <dbReference type="Rhea" id="RHEA:44360"/>
        <dbReference type="ChEBI" id="CHEBI:71677"/>
        <dbReference type="ChEBI" id="CHEBI:84359"/>
        <dbReference type="EC" id="5.3.1.32"/>
    </reaction>
</comment>
<comment type="subunit">
    <text evidence="1">Homodimer.</text>
</comment>
<comment type="subcellular location">
    <subcellularLocation>
        <location evidence="1">Cytoplasm</location>
    </subcellularLocation>
</comment>
<comment type="similarity">
    <text evidence="1">Belongs to the LsrG family.</text>
</comment>
<comment type="sequence caution" evidence="2">
    <conflict type="erroneous initiation">
        <sequence resource="EMBL-CDS" id="AAV79687"/>
    </conflict>
    <text>Extended N-terminus.</text>
</comment>
<gene>
    <name evidence="1" type="primary">lsrG</name>
    <name type="ordered locus">SPA3922</name>
</gene>